<protein>
    <recommendedName>
        <fullName evidence="1">Protein RecA</fullName>
    </recommendedName>
    <alternativeName>
        <fullName evidence="1">Recombinase A</fullName>
    </alternativeName>
</protein>
<comment type="function">
    <text evidence="1">Can catalyze the hydrolysis of ATP in the presence of single-stranded DNA, the ATP-dependent uptake of single-stranded DNA by duplex DNA, and the ATP-dependent hybridization of homologous single-stranded DNAs. It interacts with LexA causing its activation and leading to its autocatalytic cleavage.</text>
</comment>
<comment type="subcellular location">
    <subcellularLocation>
        <location evidence="1">Cytoplasm</location>
    </subcellularLocation>
</comment>
<comment type="similarity">
    <text evidence="1">Belongs to the RecA family.</text>
</comment>
<gene>
    <name evidence="1" type="primary">recA</name>
    <name type="ordered locus">Synpcc7942_0348</name>
</gene>
<reference key="1">
    <citation type="submission" date="2005-08" db="EMBL/GenBank/DDBJ databases">
        <title>Complete sequence of chromosome 1 of Synechococcus elongatus PCC 7942.</title>
        <authorList>
            <consortium name="US DOE Joint Genome Institute"/>
            <person name="Copeland A."/>
            <person name="Lucas S."/>
            <person name="Lapidus A."/>
            <person name="Barry K."/>
            <person name="Detter J.C."/>
            <person name="Glavina T."/>
            <person name="Hammon N."/>
            <person name="Israni S."/>
            <person name="Pitluck S."/>
            <person name="Schmutz J."/>
            <person name="Larimer F."/>
            <person name="Land M."/>
            <person name="Kyrpides N."/>
            <person name="Lykidis A."/>
            <person name="Golden S."/>
            <person name="Richardson P."/>
        </authorList>
    </citation>
    <scope>NUCLEOTIDE SEQUENCE [LARGE SCALE GENOMIC DNA]</scope>
    <source>
        <strain>ATCC 33912 / PCC 7942 / FACHB-805</strain>
    </source>
</reference>
<accession>Q31RD9</accession>
<name>RECA_SYNE7</name>
<dbReference type="EMBL" id="CP000100">
    <property type="protein sequence ID" value="ABB56380.1"/>
    <property type="molecule type" value="Genomic_DNA"/>
</dbReference>
<dbReference type="RefSeq" id="WP_011243477.1">
    <property type="nucleotide sequence ID" value="NZ_JACJTX010000002.1"/>
</dbReference>
<dbReference type="SMR" id="Q31RD9"/>
<dbReference type="STRING" id="1140.Synpcc7942_0348"/>
<dbReference type="PaxDb" id="1140-Synpcc7942_0348"/>
<dbReference type="GeneID" id="72429165"/>
<dbReference type="KEGG" id="syf:Synpcc7942_0348"/>
<dbReference type="eggNOG" id="COG0468">
    <property type="taxonomic scope" value="Bacteria"/>
</dbReference>
<dbReference type="HOGENOM" id="CLU_040469_3_2_3"/>
<dbReference type="OrthoDB" id="9776733at2"/>
<dbReference type="BioCyc" id="SYNEL:SYNPCC7942_0348-MONOMER"/>
<dbReference type="Proteomes" id="UP000889800">
    <property type="component" value="Chromosome"/>
</dbReference>
<dbReference type="GO" id="GO:0005829">
    <property type="term" value="C:cytosol"/>
    <property type="evidence" value="ECO:0007669"/>
    <property type="project" value="TreeGrafter"/>
</dbReference>
<dbReference type="GO" id="GO:0005524">
    <property type="term" value="F:ATP binding"/>
    <property type="evidence" value="ECO:0007669"/>
    <property type="project" value="UniProtKB-UniRule"/>
</dbReference>
<dbReference type="GO" id="GO:0016887">
    <property type="term" value="F:ATP hydrolysis activity"/>
    <property type="evidence" value="ECO:0007669"/>
    <property type="project" value="InterPro"/>
</dbReference>
<dbReference type="GO" id="GO:0140664">
    <property type="term" value="F:ATP-dependent DNA damage sensor activity"/>
    <property type="evidence" value="ECO:0007669"/>
    <property type="project" value="InterPro"/>
</dbReference>
<dbReference type="GO" id="GO:0003684">
    <property type="term" value="F:damaged DNA binding"/>
    <property type="evidence" value="ECO:0007669"/>
    <property type="project" value="UniProtKB-UniRule"/>
</dbReference>
<dbReference type="GO" id="GO:0003697">
    <property type="term" value="F:single-stranded DNA binding"/>
    <property type="evidence" value="ECO:0007669"/>
    <property type="project" value="UniProtKB-UniRule"/>
</dbReference>
<dbReference type="GO" id="GO:0006310">
    <property type="term" value="P:DNA recombination"/>
    <property type="evidence" value="ECO:0007669"/>
    <property type="project" value="UniProtKB-UniRule"/>
</dbReference>
<dbReference type="GO" id="GO:0006281">
    <property type="term" value="P:DNA repair"/>
    <property type="evidence" value="ECO:0007669"/>
    <property type="project" value="UniProtKB-UniRule"/>
</dbReference>
<dbReference type="GO" id="GO:0009432">
    <property type="term" value="P:SOS response"/>
    <property type="evidence" value="ECO:0007669"/>
    <property type="project" value="UniProtKB-UniRule"/>
</dbReference>
<dbReference type="CDD" id="cd00983">
    <property type="entry name" value="RecA"/>
    <property type="match status" value="1"/>
</dbReference>
<dbReference type="FunFam" id="3.40.50.300:FF:000087">
    <property type="entry name" value="Recombinase RecA"/>
    <property type="match status" value="1"/>
</dbReference>
<dbReference type="Gene3D" id="3.40.50.300">
    <property type="entry name" value="P-loop containing nucleotide triphosphate hydrolases"/>
    <property type="match status" value="1"/>
</dbReference>
<dbReference type="HAMAP" id="MF_00268">
    <property type="entry name" value="RecA"/>
    <property type="match status" value="1"/>
</dbReference>
<dbReference type="InterPro" id="IPR003593">
    <property type="entry name" value="AAA+_ATPase"/>
</dbReference>
<dbReference type="InterPro" id="IPR013765">
    <property type="entry name" value="DNA_recomb/repair_RecA"/>
</dbReference>
<dbReference type="InterPro" id="IPR020584">
    <property type="entry name" value="DNA_recomb/repair_RecA_CS"/>
</dbReference>
<dbReference type="InterPro" id="IPR027417">
    <property type="entry name" value="P-loop_NTPase"/>
</dbReference>
<dbReference type="InterPro" id="IPR049261">
    <property type="entry name" value="RecA-like_C"/>
</dbReference>
<dbReference type="InterPro" id="IPR049428">
    <property type="entry name" value="RecA-like_N"/>
</dbReference>
<dbReference type="InterPro" id="IPR020588">
    <property type="entry name" value="RecA_ATP-bd"/>
</dbReference>
<dbReference type="InterPro" id="IPR023400">
    <property type="entry name" value="RecA_C_sf"/>
</dbReference>
<dbReference type="InterPro" id="IPR020587">
    <property type="entry name" value="RecA_monomer-monomer_interface"/>
</dbReference>
<dbReference type="NCBIfam" id="TIGR02012">
    <property type="entry name" value="tigrfam_recA"/>
    <property type="match status" value="1"/>
</dbReference>
<dbReference type="PANTHER" id="PTHR45900:SF1">
    <property type="entry name" value="MITOCHONDRIAL DNA REPAIR PROTEIN RECA HOMOLOG-RELATED"/>
    <property type="match status" value="1"/>
</dbReference>
<dbReference type="PANTHER" id="PTHR45900">
    <property type="entry name" value="RECA"/>
    <property type="match status" value="1"/>
</dbReference>
<dbReference type="Pfam" id="PF00154">
    <property type="entry name" value="RecA"/>
    <property type="match status" value="1"/>
</dbReference>
<dbReference type="Pfam" id="PF21096">
    <property type="entry name" value="RecA_C"/>
    <property type="match status" value="1"/>
</dbReference>
<dbReference type="PRINTS" id="PR00142">
    <property type="entry name" value="RECA"/>
</dbReference>
<dbReference type="SMART" id="SM00382">
    <property type="entry name" value="AAA"/>
    <property type="match status" value="1"/>
</dbReference>
<dbReference type="SUPFAM" id="SSF52540">
    <property type="entry name" value="P-loop containing nucleoside triphosphate hydrolases"/>
    <property type="match status" value="1"/>
</dbReference>
<dbReference type="SUPFAM" id="SSF54752">
    <property type="entry name" value="RecA protein, C-terminal domain"/>
    <property type="match status" value="1"/>
</dbReference>
<dbReference type="PROSITE" id="PS00321">
    <property type="entry name" value="RECA_1"/>
    <property type="match status" value="1"/>
</dbReference>
<dbReference type="PROSITE" id="PS50162">
    <property type="entry name" value="RECA_2"/>
    <property type="match status" value="1"/>
</dbReference>
<dbReference type="PROSITE" id="PS50163">
    <property type="entry name" value="RECA_3"/>
    <property type="match status" value="1"/>
</dbReference>
<organism>
    <name type="scientific">Synechococcus elongatus (strain ATCC 33912 / PCC 7942 / FACHB-805)</name>
    <name type="common">Anacystis nidulans R2</name>
    <dbReference type="NCBI Taxonomy" id="1140"/>
    <lineage>
        <taxon>Bacteria</taxon>
        <taxon>Bacillati</taxon>
        <taxon>Cyanobacteriota</taxon>
        <taxon>Cyanophyceae</taxon>
        <taxon>Synechococcales</taxon>
        <taxon>Synechococcaceae</taxon>
        <taxon>Synechococcus</taxon>
    </lineage>
</organism>
<keyword id="KW-0067">ATP-binding</keyword>
<keyword id="KW-0963">Cytoplasm</keyword>
<keyword id="KW-0227">DNA damage</keyword>
<keyword id="KW-0233">DNA recombination</keyword>
<keyword id="KW-0234">DNA repair</keyword>
<keyword id="KW-0238">DNA-binding</keyword>
<keyword id="KW-0547">Nucleotide-binding</keyword>
<keyword id="KW-1185">Reference proteome</keyword>
<keyword id="KW-0742">SOS response</keyword>
<sequence length="356" mass="37928">MASKSDAIAPEKEKALNLVLSQIERNFGKGAIMRLGDAARLRVETISTGALTLDLALGGGLPKGRIIEVYGPESSGKTTLTLHAIAEVQKQGGIAAFVDAEHALDPVYATSVGVDIDNLLISQPDTGEMALEIVDQLVRSAAVDIVVIDSVAALVPRAEIEGEMGDAQVGLQARLMSQAMRKITGNIGKSGCTVIFLNQLRQKIGVTYGSPETTTGGQALKFYASVRLDIRRIQTLKKGTEEYGTRAKVKVVKNKVAPPFRIAEFDILFGKGISTLGCLVDLAEETGVILRKGAWYSYNGDNIGQGRDNTITHLEEHPDFRATVEQQVREKLALGAQVSANTVGAAPAKTAEDTDS</sequence>
<proteinExistence type="inferred from homology"/>
<feature type="chain" id="PRO_1000048022" description="Protein RecA">
    <location>
        <begin position="1"/>
        <end position="356"/>
    </location>
</feature>
<feature type="binding site" evidence="1">
    <location>
        <begin position="71"/>
        <end position="78"/>
    </location>
    <ligand>
        <name>ATP</name>
        <dbReference type="ChEBI" id="CHEBI:30616"/>
    </ligand>
</feature>
<evidence type="ECO:0000255" key="1">
    <source>
        <dbReference type="HAMAP-Rule" id="MF_00268"/>
    </source>
</evidence>